<reference key="1">
    <citation type="journal article" date="2004" name="Sheng Wu Hua Xue Yu Sheng Wu Wu Li Jin Zhan">
        <title>cDNA cloning and expression analysis of mouse gene encoding the protein Ercc6l which is a novel member of SNF2 family.</title>
        <authorList>
            <person name="Chen X.-G."/>
            <person name="Li Y."/>
            <person name="Zang M.-X."/>
            <person name="Pei X.-R."/>
            <person name="Xu Y.-J."/>
            <person name="Fang L.-F."/>
        </authorList>
    </citation>
    <scope>NUCLEOTIDE SEQUENCE [MRNA]</scope>
    <source>
        <strain>BALB/cJ</strain>
        <tissue>Heart</tissue>
    </source>
</reference>
<reference key="2">
    <citation type="journal article" date="2005" name="Science">
        <title>The transcriptional landscape of the mammalian genome.</title>
        <authorList>
            <person name="Carninci P."/>
            <person name="Kasukawa T."/>
            <person name="Katayama S."/>
            <person name="Gough J."/>
            <person name="Frith M.C."/>
            <person name="Maeda N."/>
            <person name="Oyama R."/>
            <person name="Ravasi T."/>
            <person name="Lenhard B."/>
            <person name="Wells C."/>
            <person name="Kodzius R."/>
            <person name="Shimokawa K."/>
            <person name="Bajic V.B."/>
            <person name="Brenner S.E."/>
            <person name="Batalov S."/>
            <person name="Forrest A.R."/>
            <person name="Zavolan M."/>
            <person name="Davis M.J."/>
            <person name="Wilming L.G."/>
            <person name="Aidinis V."/>
            <person name="Allen J.E."/>
            <person name="Ambesi-Impiombato A."/>
            <person name="Apweiler R."/>
            <person name="Aturaliya R.N."/>
            <person name="Bailey T.L."/>
            <person name="Bansal M."/>
            <person name="Baxter L."/>
            <person name="Beisel K.W."/>
            <person name="Bersano T."/>
            <person name="Bono H."/>
            <person name="Chalk A.M."/>
            <person name="Chiu K.P."/>
            <person name="Choudhary V."/>
            <person name="Christoffels A."/>
            <person name="Clutterbuck D.R."/>
            <person name="Crowe M.L."/>
            <person name="Dalla E."/>
            <person name="Dalrymple B.P."/>
            <person name="de Bono B."/>
            <person name="Della Gatta G."/>
            <person name="di Bernardo D."/>
            <person name="Down T."/>
            <person name="Engstrom P."/>
            <person name="Fagiolini M."/>
            <person name="Faulkner G."/>
            <person name="Fletcher C.F."/>
            <person name="Fukushima T."/>
            <person name="Furuno M."/>
            <person name="Futaki S."/>
            <person name="Gariboldi M."/>
            <person name="Georgii-Hemming P."/>
            <person name="Gingeras T.R."/>
            <person name="Gojobori T."/>
            <person name="Green R.E."/>
            <person name="Gustincich S."/>
            <person name="Harbers M."/>
            <person name="Hayashi Y."/>
            <person name="Hensch T.K."/>
            <person name="Hirokawa N."/>
            <person name="Hill D."/>
            <person name="Huminiecki L."/>
            <person name="Iacono M."/>
            <person name="Ikeo K."/>
            <person name="Iwama A."/>
            <person name="Ishikawa T."/>
            <person name="Jakt M."/>
            <person name="Kanapin A."/>
            <person name="Katoh M."/>
            <person name="Kawasawa Y."/>
            <person name="Kelso J."/>
            <person name="Kitamura H."/>
            <person name="Kitano H."/>
            <person name="Kollias G."/>
            <person name="Krishnan S.P."/>
            <person name="Kruger A."/>
            <person name="Kummerfeld S.K."/>
            <person name="Kurochkin I.V."/>
            <person name="Lareau L.F."/>
            <person name="Lazarevic D."/>
            <person name="Lipovich L."/>
            <person name="Liu J."/>
            <person name="Liuni S."/>
            <person name="McWilliam S."/>
            <person name="Madan Babu M."/>
            <person name="Madera M."/>
            <person name="Marchionni L."/>
            <person name="Matsuda H."/>
            <person name="Matsuzawa S."/>
            <person name="Miki H."/>
            <person name="Mignone F."/>
            <person name="Miyake S."/>
            <person name="Morris K."/>
            <person name="Mottagui-Tabar S."/>
            <person name="Mulder N."/>
            <person name="Nakano N."/>
            <person name="Nakauchi H."/>
            <person name="Ng P."/>
            <person name="Nilsson R."/>
            <person name="Nishiguchi S."/>
            <person name="Nishikawa S."/>
            <person name="Nori F."/>
            <person name="Ohara O."/>
            <person name="Okazaki Y."/>
            <person name="Orlando V."/>
            <person name="Pang K.C."/>
            <person name="Pavan W.J."/>
            <person name="Pavesi G."/>
            <person name="Pesole G."/>
            <person name="Petrovsky N."/>
            <person name="Piazza S."/>
            <person name="Reed J."/>
            <person name="Reid J.F."/>
            <person name="Ring B.Z."/>
            <person name="Ringwald M."/>
            <person name="Rost B."/>
            <person name="Ruan Y."/>
            <person name="Salzberg S.L."/>
            <person name="Sandelin A."/>
            <person name="Schneider C."/>
            <person name="Schoenbach C."/>
            <person name="Sekiguchi K."/>
            <person name="Semple C.A."/>
            <person name="Seno S."/>
            <person name="Sessa L."/>
            <person name="Sheng Y."/>
            <person name="Shibata Y."/>
            <person name="Shimada H."/>
            <person name="Shimada K."/>
            <person name="Silva D."/>
            <person name="Sinclair B."/>
            <person name="Sperling S."/>
            <person name="Stupka E."/>
            <person name="Sugiura K."/>
            <person name="Sultana R."/>
            <person name="Takenaka Y."/>
            <person name="Taki K."/>
            <person name="Tammoja K."/>
            <person name="Tan S.L."/>
            <person name="Tang S."/>
            <person name="Taylor M.S."/>
            <person name="Tegner J."/>
            <person name="Teichmann S.A."/>
            <person name="Ueda H.R."/>
            <person name="van Nimwegen E."/>
            <person name="Verardo R."/>
            <person name="Wei C.L."/>
            <person name="Yagi K."/>
            <person name="Yamanishi H."/>
            <person name="Zabarovsky E."/>
            <person name="Zhu S."/>
            <person name="Zimmer A."/>
            <person name="Hide W."/>
            <person name="Bult C."/>
            <person name="Grimmond S.M."/>
            <person name="Teasdale R.D."/>
            <person name="Liu E.T."/>
            <person name="Brusic V."/>
            <person name="Quackenbush J."/>
            <person name="Wahlestedt C."/>
            <person name="Mattick J.S."/>
            <person name="Hume D.A."/>
            <person name="Kai C."/>
            <person name="Sasaki D."/>
            <person name="Tomaru Y."/>
            <person name="Fukuda S."/>
            <person name="Kanamori-Katayama M."/>
            <person name="Suzuki M."/>
            <person name="Aoki J."/>
            <person name="Arakawa T."/>
            <person name="Iida J."/>
            <person name="Imamura K."/>
            <person name="Itoh M."/>
            <person name="Kato T."/>
            <person name="Kawaji H."/>
            <person name="Kawagashira N."/>
            <person name="Kawashima T."/>
            <person name="Kojima M."/>
            <person name="Kondo S."/>
            <person name="Konno H."/>
            <person name="Nakano K."/>
            <person name="Ninomiya N."/>
            <person name="Nishio T."/>
            <person name="Okada M."/>
            <person name="Plessy C."/>
            <person name="Shibata K."/>
            <person name="Shiraki T."/>
            <person name="Suzuki S."/>
            <person name="Tagami M."/>
            <person name="Waki K."/>
            <person name="Watahiki A."/>
            <person name="Okamura-Oho Y."/>
            <person name="Suzuki H."/>
            <person name="Kawai J."/>
            <person name="Hayashizaki Y."/>
        </authorList>
    </citation>
    <scope>NUCLEOTIDE SEQUENCE [LARGE SCALE MRNA]</scope>
    <source>
        <strain>C57BL/6J</strain>
        <tissue>Embryo</tissue>
        <tissue>Heart</tissue>
        <tissue>Skin</tissue>
    </source>
</reference>
<reference key="3">
    <citation type="journal article" date="2009" name="PLoS Biol.">
        <title>Lineage-specific biology revealed by a finished genome assembly of the mouse.</title>
        <authorList>
            <person name="Church D.M."/>
            <person name="Goodstadt L."/>
            <person name="Hillier L.W."/>
            <person name="Zody M.C."/>
            <person name="Goldstein S."/>
            <person name="She X."/>
            <person name="Bult C.J."/>
            <person name="Agarwala R."/>
            <person name="Cherry J.L."/>
            <person name="DiCuccio M."/>
            <person name="Hlavina W."/>
            <person name="Kapustin Y."/>
            <person name="Meric P."/>
            <person name="Maglott D."/>
            <person name="Birtle Z."/>
            <person name="Marques A.C."/>
            <person name="Graves T."/>
            <person name="Zhou S."/>
            <person name="Teague B."/>
            <person name="Potamousis K."/>
            <person name="Churas C."/>
            <person name="Place M."/>
            <person name="Herschleb J."/>
            <person name="Runnheim R."/>
            <person name="Forrest D."/>
            <person name="Amos-Landgraf J."/>
            <person name="Schwartz D.C."/>
            <person name="Cheng Z."/>
            <person name="Lindblad-Toh K."/>
            <person name="Eichler E.E."/>
            <person name="Ponting C.P."/>
        </authorList>
    </citation>
    <scope>NUCLEOTIDE SEQUENCE [LARGE SCALE GENOMIC DNA]</scope>
    <source>
        <strain>C57BL/6J</strain>
    </source>
</reference>
<reference key="4">
    <citation type="journal article" date="2004" name="Genome Res.">
        <title>The status, quality, and expansion of the NIH full-length cDNA project: the Mammalian Gene Collection (MGC).</title>
        <authorList>
            <consortium name="The MGC Project Team"/>
        </authorList>
    </citation>
    <scope>NUCLEOTIDE SEQUENCE [LARGE SCALE MRNA]</scope>
    <source>
        <strain>FVB/N</strain>
        <tissue>Mammary tumor</tissue>
    </source>
</reference>
<reference key="5">
    <citation type="journal article" date="2005" name="Toxicol. Lett.">
        <title>Ercc6l, a gene of SNF2 family, may play a role in the teratogenic action of alcohol.</title>
        <authorList>
            <person name="Xu Y.-J."/>
            <person name="Chen X.-G."/>
            <person name="Li Y."/>
        </authorList>
    </citation>
    <scope>TISSUE SPECIFICITY</scope>
</reference>
<reference key="6">
    <citation type="journal article" date="2007" name="Proc. Natl. Acad. Sci. U.S.A.">
        <title>Large-scale phosphorylation analysis of mouse liver.</title>
        <authorList>
            <person name="Villen J."/>
            <person name="Beausoleil S.A."/>
            <person name="Gerber S.A."/>
            <person name="Gygi S.P."/>
        </authorList>
    </citation>
    <scope>PHOSPHORYLATION [LARGE SCALE ANALYSIS] AT SER-1021</scope>
    <scope>IDENTIFICATION BY MASS SPECTROMETRY [LARGE SCALE ANALYSIS]</scope>
    <source>
        <tissue>Liver</tissue>
    </source>
</reference>
<reference key="7">
    <citation type="journal article" date="2010" name="Cell">
        <title>A tissue-specific atlas of mouse protein phosphorylation and expression.</title>
        <authorList>
            <person name="Huttlin E.L."/>
            <person name="Jedrychowski M.P."/>
            <person name="Elias J.E."/>
            <person name="Goswami T."/>
            <person name="Rad R."/>
            <person name="Beausoleil S.A."/>
            <person name="Villen J."/>
            <person name="Haas W."/>
            <person name="Sowa M.E."/>
            <person name="Gygi S.P."/>
        </authorList>
    </citation>
    <scope>PHOSPHORYLATION [LARGE SCALE ANALYSIS] AT SER-998; SER-1001; SER-1021 AND SER-1112</scope>
    <scope>IDENTIFICATION BY MASS SPECTROMETRY [LARGE SCALE ANALYSIS]</scope>
    <source>
        <tissue>Lung</tissue>
        <tissue>Spleen</tissue>
        <tissue>Testis</tissue>
    </source>
</reference>
<keyword id="KW-0067">ATP-binding</keyword>
<keyword id="KW-0131">Cell cycle</keyword>
<keyword id="KW-0132">Cell division</keyword>
<keyword id="KW-0137">Centromere</keyword>
<keyword id="KW-0158">Chromosome</keyword>
<keyword id="KW-0238">DNA-binding</keyword>
<keyword id="KW-0347">Helicase</keyword>
<keyword id="KW-0378">Hydrolase</keyword>
<keyword id="KW-0995">Kinetochore</keyword>
<keyword id="KW-0498">Mitosis</keyword>
<keyword id="KW-0547">Nucleotide-binding</keyword>
<keyword id="KW-0597">Phosphoprotein</keyword>
<keyword id="KW-1185">Reference proteome</keyword>
<keyword id="KW-0677">Repeat</keyword>
<keyword id="KW-0802">TPR repeat</keyword>
<accession>Q8BHK9</accession>
<accession>Q8BGN1</accession>
<accession>Q8BRC9</accession>
<accession>Q8CE49</accession>
<feature type="chain" id="PRO_0000328832" description="DNA excision repair protein ERCC-6-like">
    <location>
        <begin position="1"/>
        <end position="1240"/>
    </location>
</feature>
<feature type="repeat" description="TPR 1">
    <location>
        <begin position="21"/>
        <end position="54"/>
    </location>
</feature>
<feature type="domain" description="Helicase ATP-binding" evidence="2">
    <location>
        <begin position="110"/>
        <end position="278"/>
    </location>
</feature>
<feature type="domain" description="Helicase C-terminal" evidence="3">
    <location>
        <begin position="467"/>
        <end position="631"/>
    </location>
</feature>
<feature type="repeat" description="TPR 2">
    <location>
        <begin position="1191"/>
        <end position="1224"/>
    </location>
</feature>
<feature type="region of interest" description="Disordered" evidence="4">
    <location>
        <begin position="736"/>
        <end position="760"/>
    </location>
</feature>
<feature type="region of interest" description="Disordered" evidence="4">
    <location>
        <begin position="778"/>
        <end position="813"/>
    </location>
</feature>
<feature type="region of interest" description="Disordered" evidence="4">
    <location>
        <begin position="845"/>
        <end position="879"/>
    </location>
</feature>
<feature type="region of interest" description="Disordered" evidence="4">
    <location>
        <begin position="974"/>
        <end position="1085"/>
    </location>
</feature>
<feature type="region of interest" description="Disordered" evidence="4">
    <location>
        <begin position="1104"/>
        <end position="1185"/>
    </location>
</feature>
<feature type="short sequence motif" description="DEAH box">
    <location>
        <begin position="229"/>
        <end position="232"/>
    </location>
</feature>
<feature type="compositionally biased region" description="Polar residues" evidence="4">
    <location>
        <begin position="748"/>
        <end position="760"/>
    </location>
</feature>
<feature type="compositionally biased region" description="Polar residues" evidence="4">
    <location>
        <begin position="795"/>
        <end position="809"/>
    </location>
</feature>
<feature type="compositionally biased region" description="Polar residues" evidence="4">
    <location>
        <begin position="978"/>
        <end position="998"/>
    </location>
</feature>
<feature type="compositionally biased region" description="Polar residues" evidence="4">
    <location>
        <begin position="1049"/>
        <end position="1065"/>
    </location>
</feature>
<feature type="compositionally biased region" description="Acidic residues" evidence="4">
    <location>
        <begin position="1104"/>
        <end position="1117"/>
    </location>
</feature>
<feature type="compositionally biased region" description="Polar residues" evidence="4">
    <location>
        <begin position="1135"/>
        <end position="1165"/>
    </location>
</feature>
<feature type="binding site" evidence="2">
    <location>
        <begin position="123"/>
        <end position="130"/>
    </location>
    <ligand>
        <name>ATP</name>
        <dbReference type="ChEBI" id="CHEBI:30616"/>
    </ligand>
</feature>
<feature type="modified residue" description="Phosphoserine" evidence="1">
    <location>
        <position position="14"/>
    </location>
</feature>
<feature type="modified residue" description="Phosphoserine" evidence="1">
    <location>
        <position position="755"/>
    </location>
</feature>
<feature type="modified residue" description="Phosphoserine" evidence="1">
    <location>
        <position position="773"/>
    </location>
</feature>
<feature type="modified residue" description="Phosphoserine" evidence="1">
    <location>
        <position position="821"/>
    </location>
</feature>
<feature type="modified residue" description="Phosphoserine" evidence="1">
    <location>
        <position position="966"/>
    </location>
</feature>
<feature type="modified residue" description="Phosphoserine" evidence="8">
    <location>
        <position position="998"/>
    </location>
</feature>
<feature type="modified residue" description="Phosphoserine" evidence="8">
    <location>
        <position position="1001"/>
    </location>
</feature>
<feature type="modified residue" description="Phosphoserine" evidence="7 8">
    <location>
        <position position="1021"/>
    </location>
</feature>
<feature type="modified residue" description="Phosphothreonine" evidence="1">
    <location>
        <position position="1057"/>
    </location>
</feature>
<feature type="modified residue" description="Phosphoserine" evidence="1">
    <location>
        <position position="1092"/>
    </location>
</feature>
<feature type="modified residue" description="Phosphoserine" evidence="8">
    <location>
        <position position="1112"/>
    </location>
</feature>
<feature type="modified residue" description="Phosphoserine" evidence="1">
    <location>
        <position position="1172"/>
    </location>
</feature>
<feature type="sequence conflict" description="In Ref. 2; BAC26244." evidence="6" ref="2">
    <original>A</original>
    <variation>S</variation>
    <location>
        <position position="1210"/>
    </location>
</feature>
<protein>
    <recommendedName>
        <fullName>DNA excision repair protein ERCC-6-like</fullName>
        <ecNumber evidence="1">3.6.4.12</ecNumber>
    </recommendedName>
    <alternativeName>
        <fullName>ATP-dependent helicase ERCC6-like</fullName>
    </alternativeName>
</protein>
<name>ERC6L_MOUSE</name>
<dbReference type="EC" id="3.6.4.12" evidence="1"/>
<dbReference type="EMBL" id="AY172688">
    <property type="protein sequence ID" value="AAN87172.1"/>
    <property type="molecule type" value="mRNA"/>
</dbReference>
<dbReference type="EMBL" id="AK029015">
    <property type="protein sequence ID" value="BAC26244.1"/>
    <property type="molecule type" value="mRNA"/>
</dbReference>
<dbReference type="EMBL" id="AK045113">
    <property type="protein sequence ID" value="BAC32227.2"/>
    <property type="molecule type" value="mRNA"/>
</dbReference>
<dbReference type="EMBL" id="AK084617">
    <property type="protein sequence ID" value="BAC39230.1"/>
    <property type="molecule type" value="mRNA"/>
</dbReference>
<dbReference type="EMBL" id="AK084618">
    <property type="protein sequence ID" value="BAC39231.1"/>
    <property type="molecule type" value="mRNA"/>
</dbReference>
<dbReference type="EMBL" id="AL807784">
    <property type="status" value="NOT_ANNOTATED_CDS"/>
    <property type="molecule type" value="Genomic_DNA"/>
</dbReference>
<dbReference type="EMBL" id="BC037660">
    <property type="protein sequence ID" value="AAH37660.1"/>
    <property type="molecule type" value="mRNA"/>
</dbReference>
<dbReference type="CCDS" id="CCDS30321.1"/>
<dbReference type="RefSeq" id="NP_666347.2">
    <property type="nucleotide sequence ID" value="NM_146235.3"/>
</dbReference>
<dbReference type="SMR" id="Q8BHK9"/>
<dbReference type="BioGRID" id="231820">
    <property type="interactions" value="36"/>
</dbReference>
<dbReference type="FunCoup" id="Q8BHK9">
    <property type="interactions" value="265"/>
</dbReference>
<dbReference type="IntAct" id="Q8BHK9">
    <property type="interactions" value="33"/>
</dbReference>
<dbReference type="STRING" id="10090.ENSMUSP00000050592"/>
<dbReference type="GlyGen" id="Q8BHK9">
    <property type="glycosylation" value="1 site, 1 O-linked glycan (1 site)"/>
</dbReference>
<dbReference type="iPTMnet" id="Q8BHK9"/>
<dbReference type="PhosphoSitePlus" id="Q8BHK9"/>
<dbReference type="jPOST" id="Q8BHK9"/>
<dbReference type="PaxDb" id="10090-ENSMUSP00000050592"/>
<dbReference type="PeptideAtlas" id="Q8BHK9"/>
<dbReference type="ProteomicsDB" id="275768"/>
<dbReference type="Pumba" id="Q8BHK9"/>
<dbReference type="Antibodypedia" id="27876">
    <property type="antibodies" value="210 antibodies from 28 providers"/>
</dbReference>
<dbReference type="DNASU" id="236930"/>
<dbReference type="Ensembl" id="ENSMUST00000056904.3">
    <property type="protein sequence ID" value="ENSMUSP00000050592.3"/>
    <property type="gene ID" value="ENSMUSG00000051220.3"/>
</dbReference>
<dbReference type="GeneID" id="236930"/>
<dbReference type="KEGG" id="mmu:236930"/>
<dbReference type="UCSC" id="uc009tyk.2">
    <property type="organism name" value="mouse"/>
</dbReference>
<dbReference type="AGR" id="MGI:2654144"/>
<dbReference type="CTD" id="54821"/>
<dbReference type="MGI" id="MGI:2654144">
    <property type="gene designation" value="Ercc6l"/>
</dbReference>
<dbReference type="VEuPathDB" id="HostDB:ENSMUSG00000051220"/>
<dbReference type="eggNOG" id="KOG0387">
    <property type="taxonomic scope" value="Eukaryota"/>
</dbReference>
<dbReference type="GeneTree" id="ENSGT00940000156837"/>
<dbReference type="HOGENOM" id="CLU_004666_0_0_1"/>
<dbReference type="InParanoid" id="Q8BHK9"/>
<dbReference type="OMA" id="FTIEDFQ"/>
<dbReference type="OrthoDB" id="413460at2759"/>
<dbReference type="PhylomeDB" id="Q8BHK9"/>
<dbReference type="TreeFam" id="TF332843"/>
<dbReference type="Reactome" id="R-MMU-141444">
    <property type="pathway name" value="Amplification of signal from unattached kinetochores via a MAD2 inhibitory signal"/>
</dbReference>
<dbReference type="Reactome" id="R-MMU-2467813">
    <property type="pathway name" value="Separation of Sister Chromatids"/>
</dbReference>
<dbReference type="Reactome" id="R-MMU-2500257">
    <property type="pathway name" value="Resolution of Sister Chromatid Cohesion"/>
</dbReference>
<dbReference type="Reactome" id="R-MMU-5663220">
    <property type="pathway name" value="RHO GTPases Activate Formins"/>
</dbReference>
<dbReference type="Reactome" id="R-MMU-68877">
    <property type="pathway name" value="Mitotic Prometaphase"/>
</dbReference>
<dbReference type="Reactome" id="R-MMU-9648025">
    <property type="pathway name" value="EML4 and NUDC in mitotic spindle formation"/>
</dbReference>
<dbReference type="BioGRID-ORCS" id="236930">
    <property type="hits" value="22 hits in 117 CRISPR screens"/>
</dbReference>
<dbReference type="ChiTaRS" id="Ercc6l">
    <property type="organism name" value="mouse"/>
</dbReference>
<dbReference type="PRO" id="PR:Q8BHK9"/>
<dbReference type="Proteomes" id="UP000000589">
    <property type="component" value="Chromosome X"/>
</dbReference>
<dbReference type="RNAct" id="Q8BHK9">
    <property type="molecule type" value="protein"/>
</dbReference>
<dbReference type="Bgee" id="ENSMUSG00000051220">
    <property type="expression patterns" value="Expressed in primary oocyte and 140 other cell types or tissues"/>
</dbReference>
<dbReference type="GO" id="GO:0000776">
    <property type="term" value="C:kinetochore"/>
    <property type="evidence" value="ECO:0007669"/>
    <property type="project" value="UniProtKB-KW"/>
</dbReference>
<dbReference type="GO" id="GO:0005524">
    <property type="term" value="F:ATP binding"/>
    <property type="evidence" value="ECO:0007669"/>
    <property type="project" value="UniProtKB-KW"/>
</dbReference>
<dbReference type="GO" id="GO:0016887">
    <property type="term" value="F:ATP hydrolysis activity"/>
    <property type="evidence" value="ECO:0007669"/>
    <property type="project" value="RHEA"/>
</dbReference>
<dbReference type="GO" id="GO:0003677">
    <property type="term" value="F:DNA binding"/>
    <property type="evidence" value="ECO:0007669"/>
    <property type="project" value="UniProtKB-KW"/>
</dbReference>
<dbReference type="GO" id="GO:0015616">
    <property type="term" value="F:DNA translocase activity"/>
    <property type="evidence" value="ECO:0000250"/>
    <property type="project" value="UniProtKB"/>
</dbReference>
<dbReference type="GO" id="GO:0004386">
    <property type="term" value="F:helicase activity"/>
    <property type="evidence" value="ECO:0007669"/>
    <property type="project" value="UniProtKB-KW"/>
</dbReference>
<dbReference type="GO" id="GO:0051301">
    <property type="term" value="P:cell division"/>
    <property type="evidence" value="ECO:0007669"/>
    <property type="project" value="UniProtKB-KW"/>
</dbReference>
<dbReference type="CDD" id="cd18001">
    <property type="entry name" value="DEXHc_ERCC6L"/>
    <property type="match status" value="1"/>
</dbReference>
<dbReference type="CDD" id="cd18793">
    <property type="entry name" value="SF2_C_SNF"/>
    <property type="match status" value="1"/>
</dbReference>
<dbReference type="FunFam" id="3.40.50.10810:FF:000029">
    <property type="entry name" value="ERCC excision repair 6-like, spindle assembly checkpoint helicase"/>
    <property type="match status" value="1"/>
</dbReference>
<dbReference type="Gene3D" id="3.40.50.300">
    <property type="entry name" value="P-loop containing nucleotide triphosphate hydrolases"/>
    <property type="match status" value="1"/>
</dbReference>
<dbReference type="Gene3D" id="3.40.50.10810">
    <property type="entry name" value="Tandem AAA-ATPase domain"/>
    <property type="match status" value="1"/>
</dbReference>
<dbReference type="InterPro" id="IPR014001">
    <property type="entry name" value="Helicase_ATP-bd"/>
</dbReference>
<dbReference type="InterPro" id="IPR001650">
    <property type="entry name" value="Helicase_C-like"/>
</dbReference>
<dbReference type="InterPro" id="IPR027417">
    <property type="entry name" value="P-loop_NTPase"/>
</dbReference>
<dbReference type="InterPro" id="IPR038718">
    <property type="entry name" value="SNF2-like_sf"/>
</dbReference>
<dbReference type="InterPro" id="IPR049730">
    <property type="entry name" value="SNF2/RAD54-like_C"/>
</dbReference>
<dbReference type="InterPro" id="IPR000330">
    <property type="entry name" value="SNF2_N"/>
</dbReference>
<dbReference type="InterPro" id="IPR050496">
    <property type="entry name" value="SNF2_RAD54_helicase_repair"/>
</dbReference>
<dbReference type="PANTHER" id="PTHR45629:SF7">
    <property type="entry name" value="DNA EXCISION REPAIR PROTEIN ERCC-6-RELATED"/>
    <property type="match status" value="1"/>
</dbReference>
<dbReference type="PANTHER" id="PTHR45629">
    <property type="entry name" value="SNF2/RAD54 FAMILY MEMBER"/>
    <property type="match status" value="1"/>
</dbReference>
<dbReference type="Pfam" id="PF00271">
    <property type="entry name" value="Helicase_C"/>
    <property type="match status" value="1"/>
</dbReference>
<dbReference type="Pfam" id="PF00176">
    <property type="entry name" value="SNF2-rel_dom"/>
    <property type="match status" value="1"/>
</dbReference>
<dbReference type="SMART" id="SM00487">
    <property type="entry name" value="DEXDc"/>
    <property type="match status" value="1"/>
</dbReference>
<dbReference type="SMART" id="SM00490">
    <property type="entry name" value="HELICc"/>
    <property type="match status" value="1"/>
</dbReference>
<dbReference type="SUPFAM" id="SSF52540">
    <property type="entry name" value="P-loop containing nucleoside triphosphate hydrolases"/>
    <property type="match status" value="2"/>
</dbReference>
<dbReference type="PROSITE" id="PS51192">
    <property type="entry name" value="HELICASE_ATP_BIND_1"/>
    <property type="match status" value="1"/>
</dbReference>
<dbReference type="PROSITE" id="PS51194">
    <property type="entry name" value="HELICASE_CTER"/>
    <property type="match status" value="1"/>
</dbReference>
<sequence>MEASQGLAEVETLSPQLAESYLRYVQEAKEAAKNGDLEESLKLFNLAKDIFPTKKVMSRIQKLQEALEQLAEEEDDDEFIDVCSSGLLLYRELYEKLFEHQKEGIAFLYSLYKDGRKGGILADDMGLGKTVQIIAFLSGMFDASLVNHVLLIMPTNLINTWVNEFAKWTPGMRVKTFHGSSKSERTRSLTRIQQRNGVVITTYQMLLNNWQQLASFNGQAFVWDYVILDEAHKIKSASTKSAVCARAIPASNRLLLTGTPVQNNLQELWSLFDFACQGSLLGTLKTFKMEYEHPIIRAREKDATPGEKALGLKISENLMEIIKPYFLRRTKEEVQTKKADNPEARLGEKNPAGEAICDMFSLARKNDLIVWIRLLPLQEEIYRKFVSLDHIKELLMETRSPLAELGVLKKLCDHPRLLSARACRLLNLGTATFSAQDENEQEDVSNMNSIDHLPDKTLIQESGKMIFLMSLLERLQDEGHQTLVFSQSIKILNIIERLLKNKHFKTLRIDGTVTHLWEREKRIQLFQQNKEYSVFLLTTQVGGVGLTLTAATRVVIFDPSWNPATDAQAVDRVYRIGQKENVVVYRLITCGTVEEKIYRRQVFKDSLIRQTTGEKKNPFRYFTKQELKELFTVGDLQKSATQMQLQCLHAAQRRSDEKLDEHIAYLHLLGIAGISDHDLMFTRDLSVKEELDMLEDSQYIHQRVQKAQFLVESESQNTVQRQTTGIEETWLKAQEFPSQQKKKGTEFNKPQPQPSRLLTKPTQVEAISSQMASITICDQSAESEPQEHSEVHDVTSLQGSHHFNSTSDAGTIASLPQGAESIGEVSTDSLLSPAKGFAAENDAMQKKGLQASPGQEAPSENLGSFHYLPRESSKASLGPNLDLQDSVVLYHRSPTANENQNLESDVPMIEISDDLSEPPSALQGAQAIEAQLELKEDDPLKSPPQYACDFNLFLEDSADTRQNLSSKFLEHVEKEKSLQSPAANSRAKSALTLSLDSSPKSDEESEVISVKTKSKTRRILSDDEDEDEEDAFKGSHTNSINISPFPFSSVKQFDASTPQSGSNPSRRFFSPKTPGEVNTSLHSRRSLASRRSLINVVLDDVEDMEERLDNSSEEESEPGLSEENNEEEALACTEEQPSGATLASGNKSSNLTMSEPTSPAPQSSPCAPEPSSSDPMPDPPQDLAVEAGNDYESLVARGKELKECGKIQEALNCLVKALDIKSADPEVMLMTLSLYKQLNI</sequence>
<evidence type="ECO:0000250" key="1">
    <source>
        <dbReference type="UniProtKB" id="Q2NKX8"/>
    </source>
</evidence>
<evidence type="ECO:0000255" key="2">
    <source>
        <dbReference type="PROSITE-ProRule" id="PRU00541"/>
    </source>
</evidence>
<evidence type="ECO:0000255" key="3">
    <source>
        <dbReference type="PROSITE-ProRule" id="PRU00542"/>
    </source>
</evidence>
<evidence type="ECO:0000256" key="4">
    <source>
        <dbReference type="SAM" id="MobiDB-lite"/>
    </source>
</evidence>
<evidence type="ECO:0000269" key="5">
    <source>
    </source>
</evidence>
<evidence type="ECO:0000305" key="6"/>
<evidence type="ECO:0007744" key="7">
    <source>
    </source>
</evidence>
<evidence type="ECO:0007744" key="8">
    <source>
    </source>
</evidence>
<comment type="function">
    <text evidence="1">DNA helicase that acts as a tension sensor that associates with catenated DNA which is stretched under tension until it is resolved during anaphase. Functions as ATP-dependent DNA translocase. Can promote Holliday junction branch migration (in vitro).</text>
</comment>
<comment type="catalytic activity">
    <reaction evidence="1">
        <text>ATP + H2O = ADP + phosphate + H(+)</text>
        <dbReference type="Rhea" id="RHEA:13065"/>
        <dbReference type="ChEBI" id="CHEBI:15377"/>
        <dbReference type="ChEBI" id="CHEBI:15378"/>
        <dbReference type="ChEBI" id="CHEBI:30616"/>
        <dbReference type="ChEBI" id="CHEBI:43474"/>
        <dbReference type="ChEBI" id="CHEBI:456216"/>
        <dbReference type="EC" id="3.6.4.12"/>
    </reaction>
</comment>
<comment type="subunit">
    <text evidence="1">Interacts with PLK1, which phosphorylates it. Both proteins are mutually dependent on each other for correct subcellular localization. Interacts (via N-terminal TPR repeat) with BEND3 (via BEN domains 1 and 3); the interaction is direct.</text>
</comment>
<comment type="subcellular location">
    <subcellularLocation>
        <location evidence="1">Chromosome</location>
        <location evidence="1">Centromere</location>
    </subcellularLocation>
    <subcellularLocation>
        <location evidence="1">Chromosome</location>
        <location evidence="1">Centromere</location>
        <location evidence="1">Kinetochore</location>
    </subcellularLocation>
    <subcellularLocation>
        <location evidence="1">Chromosome</location>
    </subcellularLocation>
    <text evidence="1">Localizes to kinetochores, inner centromeres and thin threads connecting separating chromosomes even during anaphase. In prometaphase cells, it mostly concentrates in between kinetochores. In metaphase, it localizes to numerous thin threads that stretch between sister kinetochores of the aligned chromosomes and are composed of catenated centromeric DNA. Evolution from inner centromeres to thin threads takes place in response to tension. Resolution of thin threads requires topoisomerase 2-alpha (TOP2A) after anaphase onset.</text>
</comment>
<comment type="tissue specificity">
    <text evidence="5">Expressed mainly in the neural tube and heart of 10.5 dpc embryo. Significantly down-regulated after alcohol exposure in embryonic brain and heart, but not in embryonic kidney, liver, or lung.</text>
</comment>
<comment type="PTM">
    <text evidence="1">Phosphorylation by PLK1 prevents the association with chromosome arms and restricts its localization to the kinetochore-centromere region.</text>
</comment>
<comment type="similarity">
    <text evidence="6">Belongs to the SNF2/RAD54 helicase family.</text>
</comment>
<organism>
    <name type="scientific">Mus musculus</name>
    <name type="common">Mouse</name>
    <dbReference type="NCBI Taxonomy" id="10090"/>
    <lineage>
        <taxon>Eukaryota</taxon>
        <taxon>Metazoa</taxon>
        <taxon>Chordata</taxon>
        <taxon>Craniata</taxon>
        <taxon>Vertebrata</taxon>
        <taxon>Euteleostomi</taxon>
        <taxon>Mammalia</taxon>
        <taxon>Eutheria</taxon>
        <taxon>Euarchontoglires</taxon>
        <taxon>Glires</taxon>
        <taxon>Rodentia</taxon>
        <taxon>Myomorpha</taxon>
        <taxon>Muroidea</taxon>
        <taxon>Muridae</taxon>
        <taxon>Murinae</taxon>
        <taxon>Mus</taxon>
        <taxon>Mus</taxon>
    </lineage>
</organism>
<gene>
    <name type="primary">Ercc6l</name>
</gene>
<proteinExistence type="evidence at protein level"/>